<name>RIMP_BEII9</name>
<feature type="chain" id="PRO_0000384613" description="Ribosome maturation factor RimP">
    <location>
        <begin position="1"/>
        <end position="314"/>
    </location>
</feature>
<feature type="region of interest" description="Disordered" evidence="2">
    <location>
        <begin position="1"/>
        <end position="20"/>
    </location>
</feature>
<feature type="region of interest" description="Disordered" evidence="2">
    <location>
        <begin position="152"/>
        <end position="176"/>
    </location>
</feature>
<feature type="region of interest" description="Disordered" evidence="2">
    <location>
        <begin position="206"/>
        <end position="314"/>
    </location>
</feature>
<feature type="compositionally biased region" description="Polar residues" evidence="2">
    <location>
        <begin position="10"/>
        <end position="19"/>
    </location>
</feature>
<feature type="compositionally biased region" description="Acidic residues" evidence="2">
    <location>
        <begin position="215"/>
        <end position="227"/>
    </location>
</feature>
<feature type="compositionally biased region" description="Polar residues" evidence="2">
    <location>
        <begin position="247"/>
        <end position="256"/>
    </location>
</feature>
<feature type="compositionally biased region" description="Basic and acidic residues" evidence="2">
    <location>
        <begin position="270"/>
        <end position="279"/>
    </location>
</feature>
<feature type="compositionally biased region" description="Basic and acidic residues" evidence="2">
    <location>
        <begin position="303"/>
        <end position="314"/>
    </location>
</feature>
<evidence type="ECO:0000255" key="1">
    <source>
        <dbReference type="HAMAP-Rule" id="MF_01077"/>
    </source>
</evidence>
<evidence type="ECO:0000256" key="2">
    <source>
        <dbReference type="SAM" id="MobiDB-lite"/>
    </source>
</evidence>
<gene>
    <name evidence="1" type="primary">rimP</name>
    <name type="ordered locus">Bind_1050</name>
</gene>
<keyword id="KW-0963">Cytoplasm</keyword>
<keyword id="KW-1185">Reference proteome</keyword>
<keyword id="KW-0690">Ribosome biogenesis</keyword>
<organism>
    <name type="scientific">Beijerinckia indica subsp. indica (strain ATCC 9039 / DSM 1715 / NCIMB 8712)</name>
    <dbReference type="NCBI Taxonomy" id="395963"/>
    <lineage>
        <taxon>Bacteria</taxon>
        <taxon>Pseudomonadati</taxon>
        <taxon>Pseudomonadota</taxon>
        <taxon>Alphaproteobacteria</taxon>
        <taxon>Hyphomicrobiales</taxon>
        <taxon>Beijerinckiaceae</taxon>
        <taxon>Beijerinckia</taxon>
    </lineage>
</organism>
<sequence>MDLDGKVQPPSAQVGQQPLSPDAALHEPRLLQESGIAARVAVLAAPVLADLGLRLVRVKISGQNGTTVQIMAERPDGTMDVEACESVSEALSPVLDVEDPVKQAYHLEISSPGIDRPLVRLSDFERALGQEVRVELKTGLAGRKRFRGTIGPIEASSPIGGSKGALRLTRTDAKPEEETEVLLPLDDLHEARLVLTEDLIRQALRAAKAAREGDDGNNEEQDEEQEEPAPPRRGPGRFAPRHKTQNPEHNPAQNPISARAKPLVPAGVRTEFKKSKTGERGPAQKPHLASQAARKSDTGSSRSGHDMPRKPAPK</sequence>
<dbReference type="EMBL" id="CP001016">
    <property type="protein sequence ID" value="ACB94693.1"/>
    <property type="molecule type" value="Genomic_DNA"/>
</dbReference>
<dbReference type="RefSeq" id="WP_012384050.1">
    <property type="nucleotide sequence ID" value="NC_010581.1"/>
</dbReference>
<dbReference type="SMR" id="B2IIK0"/>
<dbReference type="STRING" id="395963.Bind_1050"/>
<dbReference type="KEGG" id="bid:Bind_1050"/>
<dbReference type="eggNOG" id="COG0779">
    <property type="taxonomic scope" value="Bacteria"/>
</dbReference>
<dbReference type="HOGENOM" id="CLU_070525_0_0_5"/>
<dbReference type="OrthoDB" id="9805006at2"/>
<dbReference type="Proteomes" id="UP000001695">
    <property type="component" value="Chromosome"/>
</dbReference>
<dbReference type="GO" id="GO:0005829">
    <property type="term" value="C:cytosol"/>
    <property type="evidence" value="ECO:0007669"/>
    <property type="project" value="TreeGrafter"/>
</dbReference>
<dbReference type="GO" id="GO:0000028">
    <property type="term" value="P:ribosomal small subunit assembly"/>
    <property type="evidence" value="ECO:0007669"/>
    <property type="project" value="TreeGrafter"/>
</dbReference>
<dbReference type="GO" id="GO:0006412">
    <property type="term" value="P:translation"/>
    <property type="evidence" value="ECO:0007669"/>
    <property type="project" value="TreeGrafter"/>
</dbReference>
<dbReference type="CDD" id="cd01734">
    <property type="entry name" value="YlxS_C"/>
    <property type="match status" value="1"/>
</dbReference>
<dbReference type="Gene3D" id="3.30.300.70">
    <property type="entry name" value="RimP-like superfamily, N-terminal"/>
    <property type="match status" value="1"/>
</dbReference>
<dbReference type="HAMAP" id="MF_01077">
    <property type="entry name" value="RimP"/>
    <property type="match status" value="1"/>
</dbReference>
<dbReference type="InterPro" id="IPR003728">
    <property type="entry name" value="Ribosome_maturation_RimP"/>
</dbReference>
<dbReference type="InterPro" id="IPR028998">
    <property type="entry name" value="RimP_C"/>
</dbReference>
<dbReference type="InterPro" id="IPR036847">
    <property type="entry name" value="RimP_C_sf"/>
</dbReference>
<dbReference type="InterPro" id="IPR028989">
    <property type="entry name" value="RimP_N"/>
</dbReference>
<dbReference type="InterPro" id="IPR035956">
    <property type="entry name" value="RimP_N_sf"/>
</dbReference>
<dbReference type="NCBIfam" id="NF000932">
    <property type="entry name" value="PRK00092.2-5"/>
    <property type="match status" value="1"/>
</dbReference>
<dbReference type="PANTHER" id="PTHR33867">
    <property type="entry name" value="RIBOSOME MATURATION FACTOR RIMP"/>
    <property type="match status" value="1"/>
</dbReference>
<dbReference type="PANTHER" id="PTHR33867:SF1">
    <property type="entry name" value="RIBOSOME MATURATION FACTOR RIMP"/>
    <property type="match status" value="1"/>
</dbReference>
<dbReference type="Pfam" id="PF17384">
    <property type="entry name" value="DUF150_C"/>
    <property type="match status" value="1"/>
</dbReference>
<dbReference type="Pfam" id="PF02576">
    <property type="entry name" value="RimP_N"/>
    <property type="match status" value="1"/>
</dbReference>
<dbReference type="SUPFAM" id="SSF74942">
    <property type="entry name" value="YhbC-like, C-terminal domain"/>
    <property type="match status" value="1"/>
</dbReference>
<dbReference type="SUPFAM" id="SSF75420">
    <property type="entry name" value="YhbC-like, N-terminal domain"/>
    <property type="match status" value="1"/>
</dbReference>
<accession>B2IIK0</accession>
<reference key="1">
    <citation type="journal article" date="2010" name="J. Bacteriol.">
        <title>Complete genome sequence of Beijerinckia indica subsp. indica.</title>
        <authorList>
            <person name="Tamas I."/>
            <person name="Dedysh S.N."/>
            <person name="Liesack W."/>
            <person name="Stott M.B."/>
            <person name="Alam M."/>
            <person name="Murrell J.C."/>
            <person name="Dunfield P.F."/>
        </authorList>
    </citation>
    <scope>NUCLEOTIDE SEQUENCE [LARGE SCALE GENOMIC DNA]</scope>
    <source>
        <strain>ATCC 9039 / DSM 1715 / NCIMB 8712</strain>
    </source>
</reference>
<protein>
    <recommendedName>
        <fullName evidence="1">Ribosome maturation factor RimP</fullName>
    </recommendedName>
</protein>
<proteinExistence type="inferred from homology"/>
<comment type="function">
    <text evidence="1">Required for maturation of 30S ribosomal subunits.</text>
</comment>
<comment type="subcellular location">
    <subcellularLocation>
        <location evidence="1">Cytoplasm</location>
    </subcellularLocation>
</comment>
<comment type="similarity">
    <text evidence="1">Belongs to the RimP family.</text>
</comment>